<protein>
    <recommendedName>
        <fullName evidence="6">Protein TIFY 11d</fullName>
    </recommendedName>
</protein>
<comment type="function">
    <text evidence="1 2">Repressor of jasmonate (JA) responses (By similarity). May act on an initial response of JA-regulated gene expression toward drought tolerance as part of a BHLH148-TIFY11D/JAZ12-COI1A complex (By similarity).</text>
</comment>
<comment type="subunit">
    <text evidence="1">Interacts with BHLH148 and COI1A. Interacts with COI1A, COI1B and COI2 in a coronatine-dependent manner. Coronatine is an analog of jasmonoyl isoleucine (JA-Ile).</text>
</comment>
<comment type="subcellular location">
    <subcellularLocation>
        <location evidence="5">Nucleus</location>
    </subcellularLocation>
</comment>
<comment type="domain">
    <text evidence="2">The jas domain (117-142) is required for interaction with COI1.</text>
</comment>
<comment type="PTM">
    <text evidence="1">Ubiquitinated. Increase in jasmonoyl isoleucine (JA-Ile) levels mediates its degradation via COI1A-mediated proteasome pathway.</text>
</comment>
<comment type="similarity">
    <text evidence="6">Belongs to the TIFY/JAZ family.</text>
</comment>
<gene>
    <name evidence="6" type="primary">TI11D</name>
    <name evidence="6" type="synonym">JAZ12</name>
    <name evidence="7" type="ORF">OsI_33431</name>
</gene>
<sequence>MAAAGSSSRFAVTCGLLSQYMRERQQPQPPVTVLEAVAEEEEEEDARTMQLFPPRAAAADGVATPSAGTAPLTIFYDGRMVVVDDVPAEKAAELMRLAGSACSPPQPAHAAALPEMPIARKASLQRFLQKRKHRITTTSEPYKKAAVASPAPEKSFAVAPVKDEPATWLGL</sequence>
<organism>
    <name type="scientific">Oryza sativa subsp. indica</name>
    <name type="common">Rice</name>
    <dbReference type="NCBI Taxonomy" id="39946"/>
    <lineage>
        <taxon>Eukaryota</taxon>
        <taxon>Viridiplantae</taxon>
        <taxon>Streptophyta</taxon>
        <taxon>Embryophyta</taxon>
        <taxon>Tracheophyta</taxon>
        <taxon>Spermatophyta</taxon>
        <taxon>Magnoliopsida</taxon>
        <taxon>Liliopsida</taxon>
        <taxon>Poales</taxon>
        <taxon>Poaceae</taxon>
        <taxon>BOP clade</taxon>
        <taxon>Oryzoideae</taxon>
        <taxon>Oryzeae</taxon>
        <taxon>Oryzinae</taxon>
        <taxon>Oryza</taxon>
        <taxon>Oryza sativa</taxon>
    </lineage>
</organism>
<evidence type="ECO:0000250" key="1">
    <source>
        <dbReference type="UniProtKB" id="Q7XEZ1"/>
    </source>
</evidence>
<evidence type="ECO:0000250" key="2">
    <source>
        <dbReference type="UniProtKB" id="Q7XPM8"/>
    </source>
</evidence>
<evidence type="ECO:0000255" key="3"/>
<evidence type="ECO:0000255" key="4">
    <source>
        <dbReference type="PROSITE-ProRule" id="PRU00650"/>
    </source>
</evidence>
<evidence type="ECO:0000255" key="5">
    <source>
        <dbReference type="PROSITE-ProRule" id="PRU00768"/>
    </source>
</evidence>
<evidence type="ECO:0000305" key="6"/>
<evidence type="ECO:0000312" key="7">
    <source>
        <dbReference type="EMBL" id="EAY78343.1"/>
    </source>
</evidence>
<reference key="1">
    <citation type="journal article" date="2005" name="PLoS Biol.">
        <title>The genomes of Oryza sativa: a history of duplications.</title>
        <authorList>
            <person name="Yu J."/>
            <person name="Wang J."/>
            <person name="Lin W."/>
            <person name="Li S."/>
            <person name="Li H."/>
            <person name="Zhou J."/>
            <person name="Ni P."/>
            <person name="Dong W."/>
            <person name="Hu S."/>
            <person name="Zeng C."/>
            <person name="Zhang J."/>
            <person name="Zhang Y."/>
            <person name="Li R."/>
            <person name="Xu Z."/>
            <person name="Li S."/>
            <person name="Li X."/>
            <person name="Zheng H."/>
            <person name="Cong L."/>
            <person name="Lin L."/>
            <person name="Yin J."/>
            <person name="Geng J."/>
            <person name="Li G."/>
            <person name="Shi J."/>
            <person name="Liu J."/>
            <person name="Lv H."/>
            <person name="Li J."/>
            <person name="Wang J."/>
            <person name="Deng Y."/>
            <person name="Ran L."/>
            <person name="Shi X."/>
            <person name="Wang X."/>
            <person name="Wu Q."/>
            <person name="Li C."/>
            <person name="Ren X."/>
            <person name="Wang J."/>
            <person name="Wang X."/>
            <person name="Li D."/>
            <person name="Liu D."/>
            <person name="Zhang X."/>
            <person name="Ji Z."/>
            <person name="Zhao W."/>
            <person name="Sun Y."/>
            <person name="Zhang Z."/>
            <person name="Bao J."/>
            <person name="Han Y."/>
            <person name="Dong L."/>
            <person name="Ji J."/>
            <person name="Chen P."/>
            <person name="Wu S."/>
            <person name="Liu J."/>
            <person name="Xiao Y."/>
            <person name="Bu D."/>
            <person name="Tan J."/>
            <person name="Yang L."/>
            <person name="Ye C."/>
            <person name="Zhang J."/>
            <person name="Xu J."/>
            <person name="Zhou Y."/>
            <person name="Yu Y."/>
            <person name="Zhang B."/>
            <person name="Zhuang S."/>
            <person name="Wei H."/>
            <person name="Liu B."/>
            <person name="Lei M."/>
            <person name="Yu H."/>
            <person name="Li Y."/>
            <person name="Xu H."/>
            <person name="Wei S."/>
            <person name="He X."/>
            <person name="Fang L."/>
            <person name="Zhang Z."/>
            <person name="Zhang Y."/>
            <person name="Huang X."/>
            <person name="Su Z."/>
            <person name="Tong W."/>
            <person name="Li J."/>
            <person name="Tong Z."/>
            <person name="Li S."/>
            <person name="Ye J."/>
            <person name="Wang L."/>
            <person name="Fang L."/>
            <person name="Lei T."/>
            <person name="Chen C.-S."/>
            <person name="Chen H.-C."/>
            <person name="Xu Z."/>
            <person name="Li H."/>
            <person name="Huang H."/>
            <person name="Zhang F."/>
            <person name="Xu H."/>
            <person name="Li N."/>
            <person name="Zhao C."/>
            <person name="Li S."/>
            <person name="Dong L."/>
            <person name="Huang Y."/>
            <person name="Li L."/>
            <person name="Xi Y."/>
            <person name="Qi Q."/>
            <person name="Li W."/>
            <person name="Zhang B."/>
            <person name="Hu W."/>
            <person name="Zhang Y."/>
            <person name="Tian X."/>
            <person name="Jiao Y."/>
            <person name="Liang X."/>
            <person name="Jin J."/>
            <person name="Gao L."/>
            <person name="Zheng W."/>
            <person name="Hao B."/>
            <person name="Liu S.-M."/>
            <person name="Wang W."/>
            <person name="Yuan L."/>
            <person name="Cao M."/>
            <person name="McDermott J."/>
            <person name="Samudrala R."/>
            <person name="Wang J."/>
            <person name="Wong G.K.-S."/>
            <person name="Yang H."/>
        </authorList>
    </citation>
    <scope>NUCLEOTIDE SEQUENCE [LARGE SCALE GENOMIC DNA]</scope>
    <source>
        <strain>cv. 93-11</strain>
    </source>
</reference>
<accession>A2Z6V9</accession>
<feature type="chain" id="PRO_0000434859" description="Protein TIFY 11d">
    <location>
        <begin position="1"/>
        <end position="171"/>
    </location>
</feature>
<feature type="domain" description="Tify" evidence="4">
    <location>
        <begin position="65"/>
        <end position="100"/>
    </location>
</feature>
<feature type="short sequence motif" description="Jas" evidence="3">
    <location>
        <begin position="117"/>
        <end position="142"/>
    </location>
</feature>
<feature type="short sequence motif" description="Nuclear localization signal" evidence="5">
    <location>
        <begin position="119"/>
        <end position="126"/>
    </location>
</feature>
<proteinExistence type="inferred from homology"/>
<keyword id="KW-1184">Jasmonic acid signaling pathway</keyword>
<keyword id="KW-0539">Nucleus</keyword>
<keyword id="KW-1185">Reference proteome</keyword>
<keyword id="KW-0346">Stress response</keyword>
<keyword id="KW-0804">Transcription</keyword>
<keyword id="KW-0805">Transcription regulation</keyword>
<keyword id="KW-0832">Ubl conjugation</keyword>
<name>TI11D_ORYSI</name>
<dbReference type="EMBL" id="CM000135">
    <property type="protein sequence ID" value="EAY78343.1"/>
    <property type="molecule type" value="Genomic_DNA"/>
</dbReference>
<dbReference type="SMR" id="A2Z6V9"/>
<dbReference type="STRING" id="39946.A2Z6V9"/>
<dbReference type="EnsemblPlants" id="BGIOSGA031997-TA">
    <property type="protein sequence ID" value="BGIOSGA031997-PA"/>
    <property type="gene ID" value="BGIOSGA031997"/>
</dbReference>
<dbReference type="EnsemblPlants" id="OsGoSa_10g0009640.01">
    <property type="protein sequence ID" value="OsGoSa_10g0009640.01"/>
    <property type="gene ID" value="OsGoSa_10g0009640"/>
</dbReference>
<dbReference type="EnsemblPlants" id="OsIR64_10g0009470.01">
    <property type="protein sequence ID" value="OsIR64_10g0009470.01"/>
    <property type="gene ID" value="OsIR64_10g0009470"/>
</dbReference>
<dbReference type="EnsemblPlants" id="OsLaMu_10g0009740.01">
    <property type="protein sequence ID" value="OsLaMu_10g0009740.01"/>
    <property type="gene ID" value="OsLaMu_10g0009740"/>
</dbReference>
<dbReference type="EnsemblPlants" id="OsLima_10g0009260.01">
    <property type="protein sequence ID" value="OsLima_10g0009260.01"/>
    <property type="gene ID" value="OsLima_10g0009260"/>
</dbReference>
<dbReference type="EnsemblPlants" id="OsLiXu_10g0009250.01">
    <property type="protein sequence ID" value="OsLiXu_10g0009250.01"/>
    <property type="gene ID" value="OsLiXu_10g0009250"/>
</dbReference>
<dbReference type="EnsemblPlants" id="OsMH63_10G009330_01">
    <property type="protein sequence ID" value="OsMH63_10G009330_01"/>
    <property type="gene ID" value="OsMH63_10G009330"/>
</dbReference>
<dbReference type="EnsemblPlants" id="OsPr106_10g0009460.01">
    <property type="protein sequence ID" value="OsPr106_10g0009460.01"/>
    <property type="gene ID" value="OsPr106_10g0009460"/>
</dbReference>
<dbReference type="Gramene" id="BGIOSGA031997-TA">
    <property type="protein sequence ID" value="BGIOSGA031997-PA"/>
    <property type="gene ID" value="BGIOSGA031997"/>
</dbReference>
<dbReference type="Gramene" id="OsGoSa_10g0009640.01">
    <property type="protein sequence ID" value="OsGoSa_10g0009640.01"/>
    <property type="gene ID" value="OsGoSa_10g0009640"/>
</dbReference>
<dbReference type="Gramene" id="OsIR64_10g0009470.01">
    <property type="protein sequence ID" value="OsIR64_10g0009470.01"/>
    <property type="gene ID" value="OsIR64_10g0009470"/>
</dbReference>
<dbReference type="Gramene" id="OsLaMu_10g0009740.01">
    <property type="protein sequence ID" value="OsLaMu_10g0009740.01"/>
    <property type="gene ID" value="OsLaMu_10g0009740"/>
</dbReference>
<dbReference type="Gramene" id="OsLima_10g0009260.01">
    <property type="protein sequence ID" value="OsLima_10g0009260.01"/>
    <property type="gene ID" value="OsLima_10g0009260"/>
</dbReference>
<dbReference type="Gramene" id="OsLiXu_10g0009250.01">
    <property type="protein sequence ID" value="OsLiXu_10g0009250.01"/>
    <property type="gene ID" value="OsLiXu_10g0009250"/>
</dbReference>
<dbReference type="Gramene" id="OsMH63_10G009330_01">
    <property type="protein sequence ID" value="OsMH63_10G009330_01"/>
    <property type="gene ID" value="OsMH63_10G009330"/>
</dbReference>
<dbReference type="Gramene" id="OsPr106_10g0009460.01">
    <property type="protein sequence ID" value="OsPr106_10g0009460.01"/>
    <property type="gene ID" value="OsPr106_10g0009460"/>
</dbReference>
<dbReference type="HOGENOM" id="CLU_051749_3_0_1"/>
<dbReference type="OMA" id="IFYEGRM"/>
<dbReference type="OrthoDB" id="694307at2759"/>
<dbReference type="Proteomes" id="UP000007015">
    <property type="component" value="Chromosome 10"/>
</dbReference>
<dbReference type="GO" id="GO:0005634">
    <property type="term" value="C:nucleus"/>
    <property type="evidence" value="ECO:0007669"/>
    <property type="project" value="UniProtKB-SubCell"/>
</dbReference>
<dbReference type="GO" id="GO:0031347">
    <property type="term" value="P:regulation of defense response"/>
    <property type="evidence" value="ECO:0007669"/>
    <property type="project" value="TreeGrafter"/>
</dbReference>
<dbReference type="GO" id="GO:2000022">
    <property type="term" value="P:regulation of jasmonic acid mediated signaling pathway"/>
    <property type="evidence" value="ECO:0007669"/>
    <property type="project" value="TreeGrafter"/>
</dbReference>
<dbReference type="GO" id="GO:0009611">
    <property type="term" value="P:response to wounding"/>
    <property type="evidence" value="ECO:0007669"/>
    <property type="project" value="TreeGrafter"/>
</dbReference>
<dbReference type="InterPro" id="IPR018467">
    <property type="entry name" value="CCT_CS"/>
</dbReference>
<dbReference type="InterPro" id="IPR040390">
    <property type="entry name" value="TIFY/JAZ"/>
</dbReference>
<dbReference type="InterPro" id="IPR010399">
    <property type="entry name" value="Tify_dom"/>
</dbReference>
<dbReference type="PANTHER" id="PTHR33077:SF52">
    <property type="entry name" value="PROTEIN TIFY 11D"/>
    <property type="match status" value="1"/>
</dbReference>
<dbReference type="PANTHER" id="PTHR33077">
    <property type="entry name" value="PROTEIN TIFY 4A-RELATED-RELATED"/>
    <property type="match status" value="1"/>
</dbReference>
<dbReference type="Pfam" id="PF09425">
    <property type="entry name" value="Jas_motif"/>
    <property type="match status" value="1"/>
</dbReference>
<dbReference type="Pfam" id="PF06200">
    <property type="entry name" value="tify"/>
    <property type="match status" value="1"/>
</dbReference>
<dbReference type="SMART" id="SM00979">
    <property type="entry name" value="TIFY"/>
    <property type="match status" value="1"/>
</dbReference>
<dbReference type="PROSITE" id="PS51320">
    <property type="entry name" value="TIFY"/>
    <property type="match status" value="1"/>
</dbReference>